<reference key="1">
    <citation type="journal article" date="2003" name="J. Bacteriol.">
        <title>Comparative genomics of Salmonella enterica serovar Typhi strains Ty2 and CT18.</title>
        <authorList>
            <person name="Deng W."/>
            <person name="Liou S.-R."/>
            <person name="Plunkett G. III"/>
            <person name="Mayhew G.F."/>
            <person name="Rose D.J."/>
            <person name="Burland V."/>
            <person name="Kodoyianni V."/>
            <person name="Schwartz D.C."/>
            <person name="Blattner F.R."/>
        </authorList>
    </citation>
    <scope>NUCLEOTIDE SEQUENCE [LARGE SCALE GENOMIC DNA]</scope>
    <source>
        <strain>ATCC 700931 / Ty2</strain>
    </source>
</reference>
<reference key="2">
    <citation type="journal article" date="2001" name="Nature">
        <title>Complete genome sequence of a multiple drug resistant Salmonella enterica serovar Typhi CT18.</title>
        <authorList>
            <person name="Parkhill J."/>
            <person name="Dougan G."/>
            <person name="James K.D."/>
            <person name="Thomson N.R."/>
            <person name="Pickard D."/>
            <person name="Wain J."/>
            <person name="Churcher C.M."/>
            <person name="Mungall K.L."/>
            <person name="Bentley S.D."/>
            <person name="Holden M.T.G."/>
            <person name="Sebaihia M."/>
            <person name="Baker S."/>
            <person name="Basham D."/>
            <person name="Brooks K."/>
            <person name="Chillingworth T."/>
            <person name="Connerton P."/>
            <person name="Cronin A."/>
            <person name="Davis P."/>
            <person name="Davies R.M."/>
            <person name="Dowd L."/>
            <person name="White N."/>
            <person name="Farrar J."/>
            <person name="Feltwell T."/>
            <person name="Hamlin N."/>
            <person name="Haque A."/>
            <person name="Hien T.T."/>
            <person name="Holroyd S."/>
            <person name="Jagels K."/>
            <person name="Krogh A."/>
            <person name="Larsen T.S."/>
            <person name="Leather S."/>
            <person name="Moule S."/>
            <person name="O'Gaora P."/>
            <person name="Parry C."/>
            <person name="Quail M.A."/>
            <person name="Rutherford K.M."/>
            <person name="Simmonds M."/>
            <person name="Skelton J."/>
            <person name="Stevens K."/>
            <person name="Whitehead S."/>
            <person name="Barrell B.G."/>
        </authorList>
    </citation>
    <scope>NUCLEOTIDE SEQUENCE [LARGE SCALE GENOMIC DNA]</scope>
    <source>
        <strain>CT18</strain>
    </source>
</reference>
<protein>
    <recommendedName>
        <fullName evidence="2">DnaA regulatory inactivator Hda</fullName>
    </recommendedName>
</protein>
<organism>
    <name type="scientific">Salmonella typhi</name>
    <dbReference type="NCBI Taxonomy" id="90370"/>
    <lineage>
        <taxon>Bacteria</taxon>
        <taxon>Pseudomonadati</taxon>
        <taxon>Pseudomonadota</taxon>
        <taxon>Gammaproteobacteria</taxon>
        <taxon>Enterobacterales</taxon>
        <taxon>Enterobacteriaceae</taxon>
        <taxon>Salmonella</taxon>
    </lineage>
</organism>
<gene>
    <name evidence="2" type="primary">hda</name>
    <name type="ordered locus">STY2737</name>
    <name type="ordered locus">t0361</name>
</gene>
<comment type="function">
    <text evidence="1">Mediates the interaction of DNA replication initiator protein DnaA with DNA polymerase subunit beta sliding clamp (dnaN). Stimulates hydrolysis of ATP-DnaA to ADP-DnaA, rendering DnaA inactive for reinitiation, a process called regulatory inhibition of DnaA or RIDA (By similarity).</text>
</comment>
<comment type="subunit">
    <text evidence="2">The active form seems to be an ADP-bound monomer. Forms the RIDA complex (regulatory inactivation of DnaA) of ATP-DnaA, ADP-Hda and the DNA-loaded beta sliding clamp (dnaN).</text>
</comment>
<comment type="similarity">
    <text evidence="2">Belongs to the DnaA family. HdA subfamily.</text>
</comment>
<name>HDA_SALTI</name>
<evidence type="ECO:0000250" key="1"/>
<evidence type="ECO:0000255" key="2">
    <source>
        <dbReference type="HAMAP-Rule" id="MF_01158"/>
    </source>
</evidence>
<accession>Q8XEQ0</accession>
<accession>Q7AMI8</accession>
<sequence length="241" mass="27472">MSSWVEVSLNTPAQLSLPLYLPDDETFASFWPGDNASLLAALQNVLRQEHSGYIYLWAREGAGRSHLLHAACAELSQRGDAVGYVPLDKRTWFVPEVLDGMEHLSLVCIDNIECVAGDELWEMAIFDLYNRILESGKTRLLITGDRPPRQLNLGLPDLASRLDWGQIYKLQPLSDEDKLQALQLRARLRGFELPEDVGRFLLKRLDREMRTLFMTLDQLDHASITAQRKLTIPFVKEILKL</sequence>
<feature type="chain" id="PRO_0000114319" description="DnaA regulatory inactivator Hda">
    <location>
        <begin position="1"/>
        <end position="241"/>
    </location>
</feature>
<keyword id="KW-0235">DNA replication</keyword>
<keyword id="KW-0236">DNA replication inhibitor</keyword>
<dbReference type="EMBL" id="AE014613">
    <property type="protein sequence ID" value="AAO68080.1"/>
    <property type="molecule type" value="Genomic_DNA"/>
</dbReference>
<dbReference type="EMBL" id="AL513382">
    <property type="protein sequence ID" value="CAD02698.1"/>
    <property type="molecule type" value="Genomic_DNA"/>
</dbReference>
<dbReference type="RefSeq" id="NP_457031.1">
    <property type="nucleotide sequence ID" value="NC_003198.1"/>
</dbReference>
<dbReference type="SMR" id="Q8XEQ0"/>
<dbReference type="STRING" id="220341.gene:17586632"/>
<dbReference type="KEGG" id="stt:t0361"/>
<dbReference type="KEGG" id="sty:STY2737"/>
<dbReference type="PATRIC" id="fig|220341.7.peg.2775"/>
<dbReference type="eggNOG" id="COG0593">
    <property type="taxonomic scope" value="Bacteria"/>
</dbReference>
<dbReference type="HOGENOM" id="CLU_072265_1_1_6"/>
<dbReference type="OMA" id="DWGQIYR"/>
<dbReference type="OrthoDB" id="9784878at2"/>
<dbReference type="Proteomes" id="UP000000541">
    <property type="component" value="Chromosome"/>
</dbReference>
<dbReference type="Proteomes" id="UP000002670">
    <property type="component" value="Chromosome"/>
</dbReference>
<dbReference type="GO" id="GO:0006270">
    <property type="term" value="P:DNA replication initiation"/>
    <property type="evidence" value="ECO:0007669"/>
    <property type="project" value="TreeGrafter"/>
</dbReference>
<dbReference type="GO" id="GO:0032297">
    <property type="term" value="P:negative regulation of DNA-templated DNA replication initiation"/>
    <property type="evidence" value="ECO:0007669"/>
    <property type="project" value="InterPro"/>
</dbReference>
<dbReference type="FunFam" id="1.10.8.60:FF:000024">
    <property type="entry name" value="DnaA regulatory inactivator Hda"/>
    <property type="match status" value="1"/>
</dbReference>
<dbReference type="FunFam" id="3.40.50.300:FF:000452">
    <property type="entry name" value="DnaA regulatory inactivator Hda"/>
    <property type="match status" value="1"/>
</dbReference>
<dbReference type="Gene3D" id="1.10.8.60">
    <property type="match status" value="1"/>
</dbReference>
<dbReference type="Gene3D" id="3.40.50.300">
    <property type="entry name" value="P-loop containing nucleotide triphosphate hydrolases"/>
    <property type="match status" value="1"/>
</dbReference>
<dbReference type="HAMAP" id="MF_01158">
    <property type="entry name" value="Hda"/>
    <property type="match status" value="1"/>
</dbReference>
<dbReference type="InterPro" id="IPR020591">
    <property type="entry name" value="Chromosome_initiator_DnaA-like"/>
</dbReference>
<dbReference type="InterPro" id="IPR013317">
    <property type="entry name" value="DnaA_dom"/>
</dbReference>
<dbReference type="InterPro" id="IPR017788">
    <property type="entry name" value="Hda"/>
</dbReference>
<dbReference type="InterPro" id="IPR022864">
    <property type="entry name" value="Hda_Enterobact"/>
</dbReference>
<dbReference type="InterPro" id="IPR055199">
    <property type="entry name" value="Hda_lid"/>
</dbReference>
<dbReference type="InterPro" id="IPR027417">
    <property type="entry name" value="P-loop_NTPase"/>
</dbReference>
<dbReference type="NCBIfam" id="TIGR03420">
    <property type="entry name" value="DnaA_homol_Hda"/>
    <property type="match status" value="1"/>
</dbReference>
<dbReference type="NCBIfam" id="NF005982">
    <property type="entry name" value="PRK08084.1"/>
    <property type="match status" value="1"/>
</dbReference>
<dbReference type="PANTHER" id="PTHR30050">
    <property type="entry name" value="CHROMOSOMAL REPLICATION INITIATOR PROTEIN DNAA"/>
    <property type="match status" value="1"/>
</dbReference>
<dbReference type="PANTHER" id="PTHR30050:SF5">
    <property type="entry name" value="DNAA REGULATORY INACTIVATOR HDA"/>
    <property type="match status" value="1"/>
</dbReference>
<dbReference type="Pfam" id="PF00308">
    <property type="entry name" value="Bac_DnaA"/>
    <property type="match status" value="1"/>
</dbReference>
<dbReference type="Pfam" id="PF22688">
    <property type="entry name" value="Hda_lid"/>
    <property type="match status" value="1"/>
</dbReference>
<dbReference type="PRINTS" id="PR00051">
    <property type="entry name" value="DNAA"/>
</dbReference>
<dbReference type="SUPFAM" id="SSF52540">
    <property type="entry name" value="P-loop containing nucleoside triphosphate hydrolases"/>
    <property type="match status" value="1"/>
</dbReference>
<proteinExistence type="inferred from homology"/>